<keyword id="KW-0963">Cytoplasm</keyword>
<keyword id="KW-0396">Initiation factor</keyword>
<keyword id="KW-0648">Protein biosynthesis</keyword>
<keyword id="KW-0694">RNA-binding</keyword>
<keyword id="KW-0699">rRNA-binding</keyword>
<reference key="1">
    <citation type="journal article" date="2003" name="Nat. Genet.">
        <title>Comparative analysis of the genome sequences of Bordetella pertussis, Bordetella parapertussis and Bordetella bronchiseptica.</title>
        <authorList>
            <person name="Parkhill J."/>
            <person name="Sebaihia M."/>
            <person name="Preston A."/>
            <person name="Murphy L.D."/>
            <person name="Thomson N.R."/>
            <person name="Harris D.E."/>
            <person name="Holden M.T.G."/>
            <person name="Churcher C.M."/>
            <person name="Bentley S.D."/>
            <person name="Mungall K.L."/>
            <person name="Cerdeno-Tarraga A.-M."/>
            <person name="Temple L."/>
            <person name="James K.D."/>
            <person name="Harris B."/>
            <person name="Quail M.A."/>
            <person name="Achtman M."/>
            <person name="Atkin R."/>
            <person name="Baker S."/>
            <person name="Basham D."/>
            <person name="Bason N."/>
            <person name="Cherevach I."/>
            <person name="Chillingworth T."/>
            <person name="Collins M."/>
            <person name="Cronin A."/>
            <person name="Davis P."/>
            <person name="Doggett J."/>
            <person name="Feltwell T."/>
            <person name="Goble A."/>
            <person name="Hamlin N."/>
            <person name="Hauser H."/>
            <person name="Holroyd S."/>
            <person name="Jagels K."/>
            <person name="Leather S."/>
            <person name="Moule S."/>
            <person name="Norberczak H."/>
            <person name="O'Neil S."/>
            <person name="Ormond D."/>
            <person name="Price C."/>
            <person name="Rabbinowitsch E."/>
            <person name="Rutter S."/>
            <person name="Sanders M."/>
            <person name="Saunders D."/>
            <person name="Seeger K."/>
            <person name="Sharp S."/>
            <person name="Simmonds M."/>
            <person name="Skelton J."/>
            <person name="Squares R."/>
            <person name="Squares S."/>
            <person name="Stevens K."/>
            <person name="Unwin L."/>
            <person name="Whitehead S."/>
            <person name="Barrell B.G."/>
            <person name="Maskell D.J."/>
        </authorList>
    </citation>
    <scope>NUCLEOTIDE SEQUENCE [LARGE SCALE GENOMIC DNA]</scope>
    <source>
        <strain>12822 / ATCC BAA-587 / NCTC 13253</strain>
    </source>
</reference>
<sequence length="87" mass="10067">MAKEELIELNGIVDEVLPDSRYRVKLDNGIEVGAYASGRMRKHRIRILAGDRVTLEMSPYDLTKGRINFRHKDERSGPPSRPPQHRR</sequence>
<organism>
    <name type="scientific">Bordetella parapertussis (strain 12822 / ATCC BAA-587 / NCTC 13253)</name>
    <dbReference type="NCBI Taxonomy" id="257311"/>
    <lineage>
        <taxon>Bacteria</taxon>
        <taxon>Pseudomonadati</taxon>
        <taxon>Pseudomonadota</taxon>
        <taxon>Betaproteobacteria</taxon>
        <taxon>Burkholderiales</taxon>
        <taxon>Alcaligenaceae</taxon>
        <taxon>Bordetella</taxon>
    </lineage>
</organism>
<dbReference type="EMBL" id="BX640426">
    <property type="protein sequence ID" value="CAE36485.1"/>
    <property type="molecule type" value="Genomic_DNA"/>
</dbReference>
<dbReference type="SMR" id="Q7WB25"/>
<dbReference type="KEGG" id="bpa:BPP1184"/>
<dbReference type="HOGENOM" id="CLU_151267_4_1_4"/>
<dbReference type="Proteomes" id="UP000001421">
    <property type="component" value="Chromosome"/>
</dbReference>
<dbReference type="GO" id="GO:0005829">
    <property type="term" value="C:cytosol"/>
    <property type="evidence" value="ECO:0007669"/>
    <property type="project" value="TreeGrafter"/>
</dbReference>
<dbReference type="GO" id="GO:0043022">
    <property type="term" value="F:ribosome binding"/>
    <property type="evidence" value="ECO:0007669"/>
    <property type="project" value="UniProtKB-UniRule"/>
</dbReference>
<dbReference type="GO" id="GO:0019843">
    <property type="term" value="F:rRNA binding"/>
    <property type="evidence" value="ECO:0007669"/>
    <property type="project" value="UniProtKB-UniRule"/>
</dbReference>
<dbReference type="GO" id="GO:0003743">
    <property type="term" value="F:translation initiation factor activity"/>
    <property type="evidence" value="ECO:0007669"/>
    <property type="project" value="UniProtKB-UniRule"/>
</dbReference>
<dbReference type="CDD" id="cd04451">
    <property type="entry name" value="S1_IF1"/>
    <property type="match status" value="1"/>
</dbReference>
<dbReference type="FunFam" id="2.40.50.140:FF:000002">
    <property type="entry name" value="Translation initiation factor IF-1"/>
    <property type="match status" value="1"/>
</dbReference>
<dbReference type="Gene3D" id="2.40.50.140">
    <property type="entry name" value="Nucleic acid-binding proteins"/>
    <property type="match status" value="1"/>
</dbReference>
<dbReference type="HAMAP" id="MF_00075">
    <property type="entry name" value="IF_1"/>
    <property type="match status" value="1"/>
</dbReference>
<dbReference type="InterPro" id="IPR012340">
    <property type="entry name" value="NA-bd_OB-fold"/>
</dbReference>
<dbReference type="InterPro" id="IPR006196">
    <property type="entry name" value="RNA-binding_domain_S1_IF1"/>
</dbReference>
<dbReference type="InterPro" id="IPR003029">
    <property type="entry name" value="S1_domain"/>
</dbReference>
<dbReference type="InterPro" id="IPR004368">
    <property type="entry name" value="TIF_IF1"/>
</dbReference>
<dbReference type="NCBIfam" id="TIGR00008">
    <property type="entry name" value="infA"/>
    <property type="match status" value="1"/>
</dbReference>
<dbReference type="PANTHER" id="PTHR33370">
    <property type="entry name" value="TRANSLATION INITIATION FACTOR IF-1, CHLOROPLASTIC"/>
    <property type="match status" value="1"/>
</dbReference>
<dbReference type="PANTHER" id="PTHR33370:SF1">
    <property type="entry name" value="TRANSLATION INITIATION FACTOR IF-1, CHLOROPLASTIC"/>
    <property type="match status" value="1"/>
</dbReference>
<dbReference type="Pfam" id="PF01176">
    <property type="entry name" value="eIF-1a"/>
    <property type="match status" value="1"/>
</dbReference>
<dbReference type="SMART" id="SM00316">
    <property type="entry name" value="S1"/>
    <property type="match status" value="1"/>
</dbReference>
<dbReference type="SUPFAM" id="SSF50249">
    <property type="entry name" value="Nucleic acid-binding proteins"/>
    <property type="match status" value="1"/>
</dbReference>
<dbReference type="PROSITE" id="PS50832">
    <property type="entry name" value="S1_IF1_TYPE"/>
    <property type="match status" value="1"/>
</dbReference>
<gene>
    <name evidence="1" type="primary">infA2</name>
    <name type="ordered locus">BPP1184</name>
</gene>
<feature type="chain" id="PRO_0000095748" description="Translation initiation factor IF-1 2">
    <location>
        <begin position="1"/>
        <end position="87"/>
    </location>
</feature>
<feature type="domain" description="S1-like" evidence="1">
    <location>
        <begin position="1"/>
        <end position="72"/>
    </location>
</feature>
<feature type="region of interest" description="Disordered" evidence="2">
    <location>
        <begin position="66"/>
        <end position="87"/>
    </location>
</feature>
<accession>Q7WB25</accession>
<name>IF12_BORPA</name>
<comment type="function">
    <text evidence="1">One of the essential components for the initiation of protein synthesis. Stabilizes the binding of IF-2 and IF-3 on the 30S subunit to which N-formylmethionyl-tRNA(fMet) subsequently binds. Helps modulate mRNA selection, yielding the 30S pre-initiation complex (PIC). Upon addition of the 50S ribosomal subunit IF-1, IF-2 and IF-3 are released leaving the mature 70S translation initiation complex.</text>
</comment>
<comment type="subunit">
    <text evidence="1">Component of the 30S ribosomal translation pre-initiation complex which assembles on the 30S ribosome in the order IF-2 and IF-3, IF-1 and N-formylmethionyl-tRNA(fMet); mRNA recruitment can occur at any time during PIC assembly.</text>
</comment>
<comment type="subcellular location">
    <subcellularLocation>
        <location evidence="1">Cytoplasm</location>
    </subcellularLocation>
</comment>
<comment type="similarity">
    <text evidence="1">Belongs to the IF-1 family.</text>
</comment>
<protein>
    <recommendedName>
        <fullName evidence="1">Translation initiation factor IF-1 2</fullName>
    </recommendedName>
</protein>
<evidence type="ECO:0000255" key="1">
    <source>
        <dbReference type="HAMAP-Rule" id="MF_00075"/>
    </source>
</evidence>
<evidence type="ECO:0000256" key="2">
    <source>
        <dbReference type="SAM" id="MobiDB-lite"/>
    </source>
</evidence>
<proteinExistence type="inferred from homology"/>